<evidence type="ECO:0000255" key="1">
    <source>
        <dbReference type="HAMAP-Rule" id="MF_01674"/>
    </source>
</evidence>
<name>SEPS_META3</name>
<accession>A6UVW6</accession>
<reference key="1">
    <citation type="submission" date="2007-06" db="EMBL/GenBank/DDBJ databases">
        <title>Complete sequence of Methanococcus aeolicus Nankai-3.</title>
        <authorList>
            <consortium name="US DOE Joint Genome Institute"/>
            <person name="Copeland A."/>
            <person name="Lucas S."/>
            <person name="Lapidus A."/>
            <person name="Barry K."/>
            <person name="Glavina del Rio T."/>
            <person name="Dalin E."/>
            <person name="Tice H."/>
            <person name="Pitluck S."/>
            <person name="Chain P."/>
            <person name="Malfatti S."/>
            <person name="Shin M."/>
            <person name="Vergez L."/>
            <person name="Schmutz J."/>
            <person name="Larimer F."/>
            <person name="Land M."/>
            <person name="Hauser L."/>
            <person name="Kyrpides N."/>
            <person name="Lykidis A."/>
            <person name="Sieprawska-Lupa M."/>
            <person name="Whitman W.B."/>
            <person name="Richardson P."/>
        </authorList>
    </citation>
    <scope>NUCLEOTIDE SEQUENCE [LARGE SCALE GENOMIC DNA]</scope>
    <source>
        <strain>ATCC BAA-1280 / DSM 17508 / OCM 812 / Nankai-3</strain>
    </source>
</reference>
<keyword id="KW-0030">Aminoacyl-tRNA synthetase</keyword>
<keyword id="KW-0067">ATP-binding</keyword>
<keyword id="KW-0436">Ligase</keyword>
<keyword id="KW-0547">Nucleotide-binding</keyword>
<keyword id="KW-0648">Protein biosynthesis</keyword>
<dbReference type="EC" id="6.1.1.27" evidence="1"/>
<dbReference type="EMBL" id="CP000743">
    <property type="protein sequence ID" value="ABR56638.1"/>
    <property type="molecule type" value="Genomic_DNA"/>
</dbReference>
<dbReference type="RefSeq" id="WP_011973770.1">
    <property type="nucleotide sequence ID" value="NC_009635.1"/>
</dbReference>
<dbReference type="SMR" id="A6UVW6"/>
<dbReference type="STRING" id="419665.Maeo_1060"/>
<dbReference type="GeneID" id="5326944"/>
<dbReference type="KEGG" id="mae:Maeo_1060"/>
<dbReference type="eggNOG" id="arCOG00411">
    <property type="taxonomic scope" value="Archaea"/>
</dbReference>
<dbReference type="HOGENOM" id="CLU_506822_0_0_2"/>
<dbReference type="OrthoDB" id="145125at2157"/>
<dbReference type="Proteomes" id="UP000001106">
    <property type="component" value="Chromosome"/>
</dbReference>
<dbReference type="GO" id="GO:0005524">
    <property type="term" value="F:ATP binding"/>
    <property type="evidence" value="ECO:0007669"/>
    <property type="project" value="UniProtKB-UniRule"/>
</dbReference>
<dbReference type="GO" id="GO:0043816">
    <property type="term" value="F:phosphoserine-tRNA(Cys) ligase activity"/>
    <property type="evidence" value="ECO:0007669"/>
    <property type="project" value="UniProtKB-EC"/>
</dbReference>
<dbReference type="GO" id="GO:0000049">
    <property type="term" value="F:tRNA binding"/>
    <property type="evidence" value="ECO:0007669"/>
    <property type="project" value="InterPro"/>
</dbReference>
<dbReference type="GO" id="GO:0006412">
    <property type="term" value="P:translation"/>
    <property type="evidence" value="ECO:0007669"/>
    <property type="project" value="UniProtKB-KW"/>
</dbReference>
<dbReference type="GO" id="GO:0043039">
    <property type="term" value="P:tRNA aminoacylation"/>
    <property type="evidence" value="ECO:0007669"/>
    <property type="project" value="UniProtKB-UniRule"/>
</dbReference>
<dbReference type="Gene3D" id="6.10.250.3340">
    <property type="match status" value="1"/>
</dbReference>
<dbReference type="Gene3D" id="6.20.250.20">
    <property type="match status" value="1"/>
</dbReference>
<dbReference type="Gene3D" id="3.30.930.10">
    <property type="entry name" value="Bira Bifunctional Protein, Domain 2"/>
    <property type="match status" value="1"/>
</dbReference>
<dbReference type="HAMAP" id="MF_01674">
    <property type="entry name" value="Sep_tRNA_synth"/>
    <property type="match status" value="1"/>
</dbReference>
<dbReference type="InterPro" id="IPR006195">
    <property type="entry name" value="aa-tRNA-synth_II"/>
</dbReference>
<dbReference type="InterPro" id="IPR045864">
    <property type="entry name" value="aa-tRNA-synth_II/BPL/LPL"/>
</dbReference>
<dbReference type="InterPro" id="IPR005246">
    <property type="entry name" value="O-Pseryl-tRNA(Cys)_ligase"/>
</dbReference>
<dbReference type="InterPro" id="IPR002319">
    <property type="entry name" value="Phenylalanyl-tRNA_Synthase"/>
</dbReference>
<dbReference type="InterPro" id="IPR041590">
    <property type="entry name" value="SepRS_C"/>
</dbReference>
<dbReference type="NCBIfam" id="TIGR00470">
    <property type="entry name" value="sepS"/>
    <property type="match status" value="1"/>
</dbReference>
<dbReference type="Pfam" id="PF18006">
    <property type="entry name" value="SepRS_C"/>
    <property type="match status" value="1"/>
</dbReference>
<dbReference type="Pfam" id="PF01409">
    <property type="entry name" value="tRNA-synt_2d"/>
    <property type="match status" value="1"/>
</dbReference>
<dbReference type="SUPFAM" id="SSF55681">
    <property type="entry name" value="Class II aaRS and biotin synthetases"/>
    <property type="match status" value="1"/>
</dbReference>
<dbReference type="PROSITE" id="PS50862">
    <property type="entry name" value="AA_TRNA_LIGASE_II"/>
    <property type="match status" value="1"/>
</dbReference>
<comment type="function">
    <text evidence="1">Catalyzes the attachment of O-phosphoserine (Sep) to tRNA(Cys).</text>
</comment>
<comment type="catalytic activity">
    <reaction evidence="1">
        <text>tRNA(Cys) + O-phospho-L-serine + ATP = O-phospho-L-seryl-tRNA(Cys) + AMP + diphosphate</text>
        <dbReference type="Rhea" id="RHEA:25678"/>
        <dbReference type="Rhea" id="RHEA-COMP:9661"/>
        <dbReference type="Rhea" id="RHEA-COMP:9719"/>
        <dbReference type="ChEBI" id="CHEBI:30616"/>
        <dbReference type="ChEBI" id="CHEBI:33019"/>
        <dbReference type="ChEBI" id="CHEBI:57524"/>
        <dbReference type="ChEBI" id="CHEBI:78442"/>
        <dbReference type="ChEBI" id="CHEBI:78551"/>
        <dbReference type="ChEBI" id="CHEBI:456215"/>
        <dbReference type="EC" id="6.1.1.27"/>
    </reaction>
</comment>
<comment type="subunit">
    <text evidence="1">Homotetramer. Interacts with SepCysS.</text>
</comment>
<comment type="similarity">
    <text evidence="1">Belongs to the class-II aminoacyl-tRNA synthetase family. O-phosphoseryl-tRNA(Cys) synthetase subfamily.</text>
</comment>
<organism>
    <name type="scientific">Methanococcus aeolicus (strain ATCC BAA-1280 / DSM 17508 / OCM 812 / Nankai-3)</name>
    <dbReference type="NCBI Taxonomy" id="419665"/>
    <lineage>
        <taxon>Archaea</taxon>
        <taxon>Methanobacteriati</taxon>
        <taxon>Methanobacteriota</taxon>
        <taxon>Methanomada group</taxon>
        <taxon>Methanococci</taxon>
        <taxon>Methanococcales</taxon>
        <taxon>Methanococcaceae</taxon>
        <taxon>Methanococcus</taxon>
    </lineage>
</organism>
<feature type="chain" id="PRO_0000363749" description="O-phosphoserine--tRNA(Cys) ligase">
    <location>
        <begin position="1"/>
        <end position="540"/>
    </location>
</feature>
<feature type="binding site" evidence="1">
    <location>
        <begin position="188"/>
        <end position="190"/>
    </location>
    <ligand>
        <name>substrate</name>
    </ligand>
</feature>
<feature type="binding site" evidence="1">
    <location>
        <begin position="233"/>
        <end position="235"/>
    </location>
    <ligand>
        <name>substrate</name>
    </ligand>
</feature>
<feature type="binding site" evidence="1">
    <location>
        <begin position="275"/>
        <end position="276"/>
    </location>
    <ligand>
        <name>substrate</name>
    </ligand>
</feature>
<feature type="binding site" evidence="1">
    <location>
        <position position="319"/>
    </location>
    <ligand>
        <name>substrate</name>
    </ligand>
</feature>
<sequence length="540" mass="61921">MFDTKKVLELANKDFEKAWITTKDLIKDAPINKKYPRIKPSFGKTNPVMDTIEQLRQAYLRMGFEEYINPVIVDEKDIYKQFGPEAMAVLDRCFYLAGLPRPDIGLSNDKIEQIEKLGIKIDSNEKKENLRKTLHLYKKGVLEGDDLVYEIANSLGLSNEMGLKILEEVFPEFKNLKAESLPLTLRSHMTSGWFITISEMMGKKPLPYALFSIDRCFRREQKEDKSHLMTYHSASCVLVGEDITLDDGKAIAEGLLSQFGFTDFQFRPDEKKSKYYTPETQTEVYAYHPKLKEWLEVATFGIYSPIALSKYNISVPVMNLGLGVERLAMINHNYEDVRKMVYPQFYEQTLSDRDIAYSIKVDKVPVLDELKDLTGELIELCVKNKDKQSPCEVFIEKKIKFYNTTKTIKITLFEKEEGKNLLGPSILNKIFVHNGNIFGVPESFDNVKEEFVKVLSEAKNKGAPTNLTYIDTICYKITSKIEEALISNTKKLKIRAPIVRSLSDVNLKIDELALKQIMGNNKVIDIRGPVFLNVKCEIND</sequence>
<proteinExistence type="inferred from homology"/>
<protein>
    <recommendedName>
        <fullName evidence="1">O-phosphoserine--tRNA(Cys) ligase</fullName>
        <shortName evidence="1">O-phosphoserine--tRNA ligase</shortName>
        <ecNumber evidence="1">6.1.1.27</ecNumber>
    </recommendedName>
    <alternativeName>
        <fullName evidence="1">Non-canonical O-phosphoseryl-tRNA(Cys) synthetase</fullName>
    </alternativeName>
    <alternativeName>
        <fullName evidence="1">O-phosphoseryl-tRNA(Cys) synthetase</fullName>
        <shortName evidence="1">SepRS</shortName>
    </alternativeName>
</protein>
<gene>
    <name evidence="1" type="primary">sepS</name>
    <name type="ordered locus">Maeo_1060</name>
</gene>